<organism>
    <name type="scientific">Staphylococcus aureus (strain NCTC 8325 / PS 47)</name>
    <dbReference type="NCBI Taxonomy" id="93061"/>
    <lineage>
        <taxon>Bacteria</taxon>
        <taxon>Bacillati</taxon>
        <taxon>Bacillota</taxon>
        <taxon>Bacilli</taxon>
        <taxon>Bacillales</taxon>
        <taxon>Staphylococcaceae</taxon>
        <taxon>Staphylococcus</taxon>
    </lineage>
</organism>
<evidence type="ECO:0000255" key="1">
    <source>
        <dbReference type="HAMAP-Rule" id="MF_01805"/>
    </source>
</evidence>
<dbReference type="EMBL" id="CP000253">
    <property type="protein sequence ID" value="ABD30668.1"/>
    <property type="molecule type" value="Genomic_DNA"/>
</dbReference>
<dbReference type="RefSeq" id="WP_000273371.1">
    <property type="nucleotide sequence ID" value="NZ_LS483365.1"/>
</dbReference>
<dbReference type="RefSeq" id="YP_500104.1">
    <property type="nucleotide sequence ID" value="NC_007795.1"/>
</dbReference>
<dbReference type="SMR" id="Q2FY76"/>
<dbReference type="STRING" id="93061.SAOUHSC_01589"/>
<dbReference type="PaxDb" id="1280-SAXN108_1518"/>
<dbReference type="GeneID" id="3920005"/>
<dbReference type="KEGG" id="sao:SAOUHSC_01589"/>
<dbReference type="PATRIC" id="fig|93061.5.peg.1446"/>
<dbReference type="eggNOG" id="COG1354">
    <property type="taxonomic scope" value="Bacteria"/>
</dbReference>
<dbReference type="HOGENOM" id="CLU_038686_3_1_9"/>
<dbReference type="OrthoDB" id="9811016at2"/>
<dbReference type="PRO" id="PR:Q2FY76"/>
<dbReference type="Proteomes" id="UP000008816">
    <property type="component" value="Chromosome"/>
</dbReference>
<dbReference type="GO" id="GO:0005737">
    <property type="term" value="C:cytoplasm"/>
    <property type="evidence" value="ECO:0007669"/>
    <property type="project" value="UniProtKB-SubCell"/>
</dbReference>
<dbReference type="GO" id="GO:0051301">
    <property type="term" value="P:cell division"/>
    <property type="evidence" value="ECO:0007669"/>
    <property type="project" value="UniProtKB-KW"/>
</dbReference>
<dbReference type="GO" id="GO:0007059">
    <property type="term" value="P:chromosome segregation"/>
    <property type="evidence" value="ECO:0007669"/>
    <property type="project" value="UniProtKB-UniRule"/>
</dbReference>
<dbReference type="GO" id="GO:0006260">
    <property type="term" value="P:DNA replication"/>
    <property type="evidence" value="ECO:0007669"/>
    <property type="project" value="UniProtKB-UniRule"/>
</dbReference>
<dbReference type="Gene3D" id="6.10.250.2410">
    <property type="match status" value="1"/>
</dbReference>
<dbReference type="Gene3D" id="1.10.10.580">
    <property type="entry name" value="Structural maintenance of chromosome 1. Chain E"/>
    <property type="match status" value="1"/>
</dbReference>
<dbReference type="HAMAP" id="MF_01805">
    <property type="entry name" value="ScpA"/>
    <property type="match status" value="1"/>
</dbReference>
<dbReference type="InterPro" id="IPR003768">
    <property type="entry name" value="ScpA"/>
</dbReference>
<dbReference type="InterPro" id="IPR023093">
    <property type="entry name" value="ScpA-like_C"/>
</dbReference>
<dbReference type="PANTHER" id="PTHR33969">
    <property type="entry name" value="SEGREGATION AND CONDENSATION PROTEIN A"/>
    <property type="match status" value="1"/>
</dbReference>
<dbReference type="PANTHER" id="PTHR33969:SF2">
    <property type="entry name" value="SEGREGATION AND CONDENSATION PROTEIN A"/>
    <property type="match status" value="1"/>
</dbReference>
<dbReference type="Pfam" id="PF02616">
    <property type="entry name" value="SMC_ScpA"/>
    <property type="match status" value="1"/>
</dbReference>
<name>SCPA_STAA8</name>
<feature type="chain" id="PRO_1000069977" description="Segregation and condensation protein A">
    <location>
        <begin position="1"/>
        <end position="243"/>
    </location>
</feature>
<comment type="function">
    <text evidence="1">Participates in chromosomal partition during cell division. May act via the formation of a condensin-like complex containing Smc and ScpB that pull DNA away from mid-cell into both cell halves.</text>
</comment>
<comment type="subunit">
    <text evidence="1">Component of a cohesin-like complex composed of ScpA, ScpB and the Smc homodimer, in which ScpA and ScpB bind to the head domain of Smc. The presence of the three proteins is required for the association of the complex with DNA.</text>
</comment>
<comment type="subcellular location">
    <subcellularLocation>
        <location evidence="1">Cytoplasm</location>
    </subcellularLocation>
    <text evidence="1">Associated with two foci at the outer edges of the nucleoid region in young cells, and at four foci within both cell halves in older cells.</text>
</comment>
<comment type="similarity">
    <text evidence="1">Belongs to the ScpA family.</text>
</comment>
<accession>Q2FY76</accession>
<reference key="1">
    <citation type="book" date="2006" name="Gram positive pathogens, 2nd edition">
        <title>The Staphylococcus aureus NCTC 8325 genome.</title>
        <editorList>
            <person name="Fischetti V."/>
            <person name="Novick R."/>
            <person name="Ferretti J."/>
            <person name="Portnoy D."/>
            <person name="Rood J."/>
        </editorList>
        <authorList>
            <person name="Gillaspy A.F."/>
            <person name="Worrell V."/>
            <person name="Orvis J."/>
            <person name="Roe B.A."/>
            <person name="Dyer D.W."/>
            <person name="Iandolo J.J."/>
        </authorList>
    </citation>
    <scope>NUCLEOTIDE SEQUENCE [LARGE SCALE GENOMIC DNA]</scope>
    <source>
        <strain>NCTC 8325 / PS 47</strain>
    </source>
</reference>
<sequence>MYEVKLDAFNGPLDLLLHLIQKFEIDIYDIPMQALTEQYMQYVHAMKQLEINIASEYLVLASELLMIKSKMLLPQSTSDMDVDDDPREDLVGRLIEYQNYKEYTAILNDMKEERDFYFTKRPTDLSHLETDESWDPNHTIDLTELIVAYQRVKNRVELNTPKSVEIRKETFTIQQATEQVTSRLKDKDHFNFFSLFTFSEPIEQVVTHFLAILEMSKAGIINIEQQRNFEDINIIRGVNYHFG</sequence>
<proteinExistence type="inferred from homology"/>
<gene>
    <name evidence="1" type="primary">scpA</name>
    <name type="ordered locus">SAOUHSC_01589</name>
</gene>
<keyword id="KW-0131">Cell cycle</keyword>
<keyword id="KW-0132">Cell division</keyword>
<keyword id="KW-0159">Chromosome partition</keyword>
<keyword id="KW-0963">Cytoplasm</keyword>
<keyword id="KW-1185">Reference proteome</keyword>
<protein>
    <recommendedName>
        <fullName evidence="1">Segregation and condensation protein A</fullName>
    </recommendedName>
</protein>